<feature type="chain" id="PRO_0000131615" description="Small ribosomal subunit protein uS5">
    <location>
        <begin position="1"/>
        <end position="174"/>
    </location>
</feature>
<feature type="domain" description="S5 DRBM" evidence="1">
    <location>
        <begin position="17"/>
        <end position="80"/>
    </location>
</feature>
<sequence>MANRRKNPRKVEKETDWQERVVQIRRVSKVVKGGKKLSFRAIVVVGNERGQVGVGVGKAADVIGAVRKGVADGKKHLIDVPITKSNSIPHPTFGEGGAARVMIRPAAPGTGVIAGGSVRTVLELAGVRNVLAKQLGSSNPLNNARAALEALAALRTFQEVAEEREIPIENLYSK</sequence>
<proteinExistence type="inferred from homology"/>
<name>RS5_THEVB</name>
<evidence type="ECO:0000255" key="1">
    <source>
        <dbReference type="HAMAP-Rule" id="MF_01307"/>
    </source>
</evidence>
<evidence type="ECO:0000305" key="2"/>
<reference key="1">
    <citation type="journal article" date="2002" name="DNA Res.">
        <title>Complete genome structure of the thermophilic cyanobacterium Thermosynechococcus elongatus BP-1.</title>
        <authorList>
            <person name="Nakamura Y."/>
            <person name="Kaneko T."/>
            <person name="Sato S."/>
            <person name="Ikeuchi M."/>
            <person name="Katoh H."/>
            <person name="Sasamoto S."/>
            <person name="Watanabe A."/>
            <person name="Iriguchi M."/>
            <person name="Kawashima K."/>
            <person name="Kimura T."/>
            <person name="Kishida Y."/>
            <person name="Kiyokawa C."/>
            <person name="Kohara M."/>
            <person name="Matsumoto M."/>
            <person name="Matsuno A."/>
            <person name="Nakazaki N."/>
            <person name="Shimpo S."/>
            <person name="Sugimoto M."/>
            <person name="Takeuchi C."/>
            <person name="Yamada M."/>
            <person name="Tabata S."/>
        </authorList>
    </citation>
    <scope>NUCLEOTIDE SEQUENCE [LARGE SCALE GENOMIC DNA]</scope>
    <source>
        <strain>NIES-2133 / IAM M-273 / BP-1</strain>
    </source>
</reference>
<gene>
    <name evidence="1" type="primary">rpsE</name>
    <name evidence="1" type="synonym">rps5</name>
    <name type="ordered locus">tlr0097</name>
</gene>
<organism>
    <name type="scientific">Thermosynechococcus vestitus (strain NIES-2133 / IAM M-273 / BP-1)</name>
    <dbReference type="NCBI Taxonomy" id="197221"/>
    <lineage>
        <taxon>Bacteria</taxon>
        <taxon>Bacillati</taxon>
        <taxon>Cyanobacteriota</taxon>
        <taxon>Cyanophyceae</taxon>
        <taxon>Acaryochloridales</taxon>
        <taxon>Thermosynechococcaceae</taxon>
        <taxon>Thermosynechococcus</taxon>
    </lineage>
</organism>
<keyword id="KW-1185">Reference proteome</keyword>
<keyword id="KW-0687">Ribonucleoprotein</keyword>
<keyword id="KW-0689">Ribosomal protein</keyword>
<keyword id="KW-0694">RNA-binding</keyword>
<keyword id="KW-0699">rRNA-binding</keyword>
<accession>P59126</accession>
<comment type="function">
    <text evidence="1">With S4 and S12 plays an important role in translational accuracy.</text>
</comment>
<comment type="function">
    <text evidence="1">Located at the back of the 30S subunit body where it stabilizes the conformation of the head with respect to the body.</text>
</comment>
<comment type="subunit">
    <text evidence="1">Part of the 30S ribosomal subunit. Contacts proteins S4 and S8.</text>
</comment>
<comment type="domain">
    <text>The N-terminal domain interacts with the head of the 30S subunit; the C-terminal domain interacts with the body and contacts protein S4. The interaction surface between S4 and S5 is involved in control of translational fidelity.</text>
</comment>
<comment type="similarity">
    <text evidence="1">Belongs to the universal ribosomal protein uS5 family.</text>
</comment>
<dbReference type="EMBL" id="BA000039">
    <property type="protein sequence ID" value="BAC07650.1"/>
    <property type="molecule type" value="Genomic_DNA"/>
</dbReference>
<dbReference type="RefSeq" id="NP_680888.1">
    <property type="nucleotide sequence ID" value="NC_004113.1"/>
</dbReference>
<dbReference type="RefSeq" id="WP_011055952.1">
    <property type="nucleotide sequence ID" value="NC_004113.1"/>
</dbReference>
<dbReference type="SMR" id="P59126"/>
<dbReference type="STRING" id="197221.gene:10746675"/>
<dbReference type="EnsemblBacteria" id="BAC07650">
    <property type="protein sequence ID" value="BAC07650"/>
    <property type="gene ID" value="BAC07650"/>
</dbReference>
<dbReference type="KEGG" id="tel:tlr0097"/>
<dbReference type="PATRIC" id="fig|197221.4.peg.100"/>
<dbReference type="eggNOG" id="COG0098">
    <property type="taxonomic scope" value="Bacteria"/>
</dbReference>
<dbReference type="Proteomes" id="UP000000440">
    <property type="component" value="Chromosome"/>
</dbReference>
<dbReference type="GO" id="GO:0015935">
    <property type="term" value="C:small ribosomal subunit"/>
    <property type="evidence" value="ECO:0007669"/>
    <property type="project" value="InterPro"/>
</dbReference>
<dbReference type="GO" id="GO:0019843">
    <property type="term" value="F:rRNA binding"/>
    <property type="evidence" value="ECO:0007669"/>
    <property type="project" value="UniProtKB-UniRule"/>
</dbReference>
<dbReference type="GO" id="GO:0003735">
    <property type="term" value="F:structural constituent of ribosome"/>
    <property type="evidence" value="ECO:0007669"/>
    <property type="project" value="InterPro"/>
</dbReference>
<dbReference type="GO" id="GO:0006412">
    <property type="term" value="P:translation"/>
    <property type="evidence" value="ECO:0007669"/>
    <property type="project" value="UniProtKB-UniRule"/>
</dbReference>
<dbReference type="FunFam" id="3.30.160.20:FF:000001">
    <property type="entry name" value="30S ribosomal protein S5"/>
    <property type="match status" value="1"/>
</dbReference>
<dbReference type="FunFam" id="3.30.230.10:FF:000002">
    <property type="entry name" value="30S ribosomal protein S5"/>
    <property type="match status" value="1"/>
</dbReference>
<dbReference type="Gene3D" id="3.30.160.20">
    <property type="match status" value="1"/>
</dbReference>
<dbReference type="Gene3D" id="3.30.230.10">
    <property type="match status" value="1"/>
</dbReference>
<dbReference type="HAMAP" id="MF_01307_B">
    <property type="entry name" value="Ribosomal_uS5_B"/>
    <property type="match status" value="1"/>
</dbReference>
<dbReference type="InterPro" id="IPR020568">
    <property type="entry name" value="Ribosomal_Su5_D2-typ_SF"/>
</dbReference>
<dbReference type="InterPro" id="IPR000851">
    <property type="entry name" value="Ribosomal_uS5"/>
</dbReference>
<dbReference type="InterPro" id="IPR005712">
    <property type="entry name" value="Ribosomal_uS5_bac-type"/>
</dbReference>
<dbReference type="InterPro" id="IPR005324">
    <property type="entry name" value="Ribosomal_uS5_C"/>
</dbReference>
<dbReference type="InterPro" id="IPR013810">
    <property type="entry name" value="Ribosomal_uS5_N"/>
</dbReference>
<dbReference type="InterPro" id="IPR018192">
    <property type="entry name" value="Ribosomal_uS5_N_CS"/>
</dbReference>
<dbReference type="InterPro" id="IPR014721">
    <property type="entry name" value="Ribsml_uS5_D2-typ_fold_subgr"/>
</dbReference>
<dbReference type="NCBIfam" id="TIGR01021">
    <property type="entry name" value="rpsE_bact"/>
    <property type="match status" value="1"/>
</dbReference>
<dbReference type="PANTHER" id="PTHR48277">
    <property type="entry name" value="MITOCHONDRIAL RIBOSOMAL PROTEIN S5"/>
    <property type="match status" value="1"/>
</dbReference>
<dbReference type="PANTHER" id="PTHR48277:SF1">
    <property type="entry name" value="MITOCHONDRIAL RIBOSOMAL PROTEIN S5"/>
    <property type="match status" value="1"/>
</dbReference>
<dbReference type="Pfam" id="PF00333">
    <property type="entry name" value="Ribosomal_S5"/>
    <property type="match status" value="1"/>
</dbReference>
<dbReference type="Pfam" id="PF03719">
    <property type="entry name" value="Ribosomal_S5_C"/>
    <property type="match status" value="1"/>
</dbReference>
<dbReference type="SUPFAM" id="SSF54768">
    <property type="entry name" value="dsRNA-binding domain-like"/>
    <property type="match status" value="1"/>
</dbReference>
<dbReference type="SUPFAM" id="SSF54211">
    <property type="entry name" value="Ribosomal protein S5 domain 2-like"/>
    <property type="match status" value="1"/>
</dbReference>
<dbReference type="PROSITE" id="PS00585">
    <property type="entry name" value="RIBOSOMAL_S5"/>
    <property type="match status" value="1"/>
</dbReference>
<dbReference type="PROSITE" id="PS50881">
    <property type="entry name" value="S5_DSRBD"/>
    <property type="match status" value="1"/>
</dbReference>
<protein>
    <recommendedName>
        <fullName evidence="1">Small ribosomal subunit protein uS5</fullName>
    </recommendedName>
    <alternativeName>
        <fullName evidence="2">30S ribosomal protein S5</fullName>
    </alternativeName>
</protein>